<name>AROC_PROMT</name>
<reference key="1">
    <citation type="journal article" date="2007" name="PLoS Genet.">
        <title>Patterns and implications of gene gain and loss in the evolution of Prochlorococcus.</title>
        <authorList>
            <person name="Kettler G.C."/>
            <person name="Martiny A.C."/>
            <person name="Huang K."/>
            <person name="Zucker J."/>
            <person name="Coleman M.L."/>
            <person name="Rodrigue S."/>
            <person name="Chen F."/>
            <person name="Lapidus A."/>
            <person name="Ferriera S."/>
            <person name="Johnson J."/>
            <person name="Steglich C."/>
            <person name="Church G.M."/>
            <person name="Richardson P."/>
            <person name="Chisholm S.W."/>
        </authorList>
    </citation>
    <scope>NUCLEOTIDE SEQUENCE [LARGE SCALE GENOMIC DNA]</scope>
    <source>
        <strain>NATL2A</strain>
    </source>
</reference>
<protein>
    <recommendedName>
        <fullName evidence="1">Chorismate synthase</fullName>
        <shortName evidence="1">CS</shortName>
        <ecNumber evidence="1">4.2.3.5</ecNumber>
    </recommendedName>
    <alternativeName>
        <fullName evidence="1">5-enolpyruvylshikimate-3-phosphate phospholyase</fullName>
    </alternativeName>
</protein>
<feature type="chain" id="PRO_0000256314" description="Chorismate synthase">
    <location>
        <begin position="1"/>
        <end position="361"/>
    </location>
</feature>
<feature type="binding site" evidence="1">
    <location>
        <position position="47"/>
    </location>
    <ligand>
        <name>NADP(+)</name>
        <dbReference type="ChEBI" id="CHEBI:58349"/>
    </ligand>
</feature>
<feature type="binding site" evidence="1">
    <location>
        <begin position="124"/>
        <end position="126"/>
    </location>
    <ligand>
        <name>FMN</name>
        <dbReference type="ChEBI" id="CHEBI:58210"/>
    </ligand>
</feature>
<feature type="binding site" evidence="1">
    <location>
        <position position="286"/>
    </location>
    <ligand>
        <name>FMN</name>
        <dbReference type="ChEBI" id="CHEBI:58210"/>
    </ligand>
</feature>
<feature type="binding site" evidence="1">
    <location>
        <begin position="301"/>
        <end position="305"/>
    </location>
    <ligand>
        <name>FMN</name>
        <dbReference type="ChEBI" id="CHEBI:58210"/>
    </ligand>
</feature>
<feature type="binding site" evidence="1">
    <location>
        <position position="327"/>
    </location>
    <ligand>
        <name>FMN</name>
        <dbReference type="ChEBI" id="CHEBI:58210"/>
    </ligand>
</feature>
<dbReference type="EC" id="4.2.3.5" evidence="1"/>
<dbReference type="EMBL" id="CP000095">
    <property type="protein sequence ID" value="AAZ59081.1"/>
    <property type="molecule type" value="Genomic_DNA"/>
</dbReference>
<dbReference type="RefSeq" id="WP_011294226.1">
    <property type="nucleotide sequence ID" value="NC_007335.2"/>
</dbReference>
<dbReference type="SMR" id="Q46HE7"/>
<dbReference type="STRING" id="59920.PMN2A_1593"/>
<dbReference type="KEGG" id="pmn:PMN2A_1593"/>
<dbReference type="HOGENOM" id="CLU_034547_0_1_3"/>
<dbReference type="OrthoDB" id="9771806at2"/>
<dbReference type="PhylomeDB" id="Q46HE7"/>
<dbReference type="UniPathway" id="UPA00053">
    <property type="reaction ID" value="UER00090"/>
</dbReference>
<dbReference type="Proteomes" id="UP000002535">
    <property type="component" value="Chromosome"/>
</dbReference>
<dbReference type="GO" id="GO:0005829">
    <property type="term" value="C:cytosol"/>
    <property type="evidence" value="ECO:0007669"/>
    <property type="project" value="TreeGrafter"/>
</dbReference>
<dbReference type="GO" id="GO:0004107">
    <property type="term" value="F:chorismate synthase activity"/>
    <property type="evidence" value="ECO:0007669"/>
    <property type="project" value="UniProtKB-UniRule"/>
</dbReference>
<dbReference type="GO" id="GO:0010181">
    <property type="term" value="F:FMN binding"/>
    <property type="evidence" value="ECO:0007669"/>
    <property type="project" value="TreeGrafter"/>
</dbReference>
<dbReference type="GO" id="GO:0008652">
    <property type="term" value="P:amino acid biosynthetic process"/>
    <property type="evidence" value="ECO:0007669"/>
    <property type="project" value="UniProtKB-KW"/>
</dbReference>
<dbReference type="GO" id="GO:0009073">
    <property type="term" value="P:aromatic amino acid family biosynthetic process"/>
    <property type="evidence" value="ECO:0007669"/>
    <property type="project" value="UniProtKB-KW"/>
</dbReference>
<dbReference type="GO" id="GO:0009423">
    <property type="term" value="P:chorismate biosynthetic process"/>
    <property type="evidence" value="ECO:0007669"/>
    <property type="project" value="UniProtKB-UniRule"/>
</dbReference>
<dbReference type="CDD" id="cd07304">
    <property type="entry name" value="Chorismate_synthase"/>
    <property type="match status" value="1"/>
</dbReference>
<dbReference type="FunFam" id="3.60.150.10:FF:000003">
    <property type="entry name" value="Chorismate synthase"/>
    <property type="match status" value="1"/>
</dbReference>
<dbReference type="Gene3D" id="3.60.150.10">
    <property type="entry name" value="Chorismate synthase AroC"/>
    <property type="match status" value="1"/>
</dbReference>
<dbReference type="HAMAP" id="MF_00300">
    <property type="entry name" value="Chorismate_synth"/>
    <property type="match status" value="1"/>
</dbReference>
<dbReference type="InterPro" id="IPR000453">
    <property type="entry name" value="Chorismate_synth"/>
</dbReference>
<dbReference type="InterPro" id="IPR035904">
    <property type="entry name" value="Chorismate_synth_AroC_sf"/>
</dbReference>
<dbReference type="InterPro" id="IPR020541">
    <property type="entry name" value="Chorismate_synthase_CS"/>
</dbReference>
<dbReference type="NCBIfam" id="TIGR00033">
    <property type="entry name" value="aroC"/>
    <property type="match status" value="1"/>
</dbReference>
<dbReference type="NCBIfam" id="NF003793">
    <property type="entry name" value="PRK05382.1"/>
    <property type="match status" value="1"/>
</dbReference>
<dbReference type="PANTHER" id="PTHR21085">
    <property type="entry name" value="CHORISMATE SYNTHASE"/>
    <property type="match status" value="1"/>
</dbReference>
<dbReference type="PANTHER" id="PTHR21085:SF0">
    <property type="entry name" value="CHORISMATE SYNTHASE"/>
    <property type="match status" value="1"/>
</dbReference>
<dbReference type="Pfam" id="PF01264">
    <property type="entry name" value="Chorismate_synt"/>
    <property type="match status" value="1"/>
</dbReference>
<dbReference type="PIRSF" id="PIRSF001456">
    <property type="entry name" value="Chorismate_synth"/>
    <property type="match status" value="1"/>
</dbReference>
<dbReference type="SUPFAM" id="SSF103263">
    <property type="entry name" value="Chorismate synthase, AroC"/>
    <property type="match status" value="1"/>
</dbReference>
<dbReference type="PROSITE" id="PS00787">
    <property type="entry name" value="CHORISMATE_SYNTHASE_1"/>
    <property type="match status" value="1"/>
</dbReference>
<dbReference type="PROSITE" id="PS00788">
    <property type="entry name" value="CHORISMATE_SYNTHASE_2"/>
    <property type="match status" value="1"/>
</dbReference>
<dbReference type="PROSITE" id="PS00789">
    <property type="entry name" value="CHORISMATE_SYNTHASE_3"/>
    <property type="match status" value="1"/>
</dbReference>
<keyword id="KW-0028">Amino-acid biosynthesis</keyword>
<keyword id="KW-0057">Aromatic amino acid biosynthesis</keyword>
<keyword id="KW-0274">FAD</keyword>
<keyword id="KW-0285">Flavoprotein</keyword>
<keyword id="KW-0288">FMN</keyword>
<keyword id="KW-0456">Lyase</keyword>
<keyword id="KW-0521">NADP</keyword>
<keyword id="KW-1185">Reference proteome</keyword>
<accession>Q46HE7</accession>
<comment type="function">
    <text evidence="1">Catalyzes the anti-1,4-elimination of the C-3 phosphate and the C-6 proR hydrogen from 5-enolpyruvylshikimate-3-phosphate (EPSP) to yield chorismate, which is the branch point compound that serves as the starting substrate for the three terminal pathways of aromatic amino acid biosynthesis. This reaction introduces a second double bond into the aromatic ring system.</text>
</comment>
<comment type="catalytic activity">
    <reaction evidence="1">
        <text>5-O-(1-carboxyvinyl)-3-phosphoshikimate = chorismate + phosphate</text>
        <dbReference type="Rhea" id="RHEA:21020"/>
        <dbReference type="ChEBI" id="CHEBI:29748"/>
        <dbReference type="ChEBI" id="CHEBI:43474"/>
        <dbReference type="ChEBI" id="CHEBI:57701"/>
        <dbReference type="EC" id="4.2.3.5"/>
    </reaction>
</comment>
<comment type="cofactor">
    <cofactor evidence="1">
        <name>FMNH2</name>
        <dbReference type="ChEBI" id="CHEBI:57618"/>
    </cofactor>
    <text evidence="1">Reduced FMN (FMNH(2)).</text>
</comment>
<comment type="pathway">
    <text evidence="1">Metabolic intermediate biosynthesis; chorismate biosynthesis; chorismate from D-erythrose 4-phosphate and phosphoenolpyruvate: step 7/7.</text>
</comment>
<comment type="subunit">
    <text evidence="1">Homotetramer.</text>
</comment>
<comment type="similarity">
    <text evidence="1">Belongs to the chorismate synthase family.</text>
</comment>
<gene>
    <name evidence="1" type="primary">aroC</name>
    <name type="ordered locus">PMN2A_1593</name>
</gene>
<organism>
    <name type="scientific">Prochlorococcus marinus (strain NATL2A)</name>
    <dbReference type="NCBI Taxonomy" id="59920"/>
    <lineage>
        <taxon>Bacteria</taxon>
        <taxon>Bacillati</taxon>
        <taxon>Cyanobacteriota</taxon>
        <taxon>Cyanophyceae</taxon>
        <taxon>Synechococcales</taxon>
        <taxon>Prochlorococcaceae</taxon>
        <taxon>Prochlorococcus</taxon>
    </lineage>
</organism>
<proteinExistence type="inferred from homology"/>
<evidence type="ECO:0000255" key="1">
    <source>
        <dbReference type="HAMAP-Rule" id="MF_00300"/>
    </source>
</evidence>
<sequence length="361" mass="38765">MGSSFGKLFTISSFGESHGGGVGVIIDGCPPRLELDINEIQNDLNRRRPGQSKITTPRNESDEVEILSGLLGNKTLGTPIAMVVRNKDHRPKDYSEIKKTFRPSHADATYQKKYGIQASSGGGRASARETIGRVAAGSVAKQLLNKSAKTEILAWVKRIHDIEAEIHPSEVTFDEIEKNIVRCPNQSAADLMIQRVEAFGKEGDSCGGVIECVVRNPPIGIGMPVFDKLEADLAKALMSLPATKGFEVGSGFGGTYLKGSEHNDPFLPSDSNQLKTATNNSGGIQGGISNGEDIVLRVGFKPTATIRKSQKTIDEDGNAITLKATGRHDPCVLPRAVPMVEAMVALVLADHLLRQRGQCPD</sequence>